<gene>
    <name evidence="1" type="primary">trhO</name>
    <name type="ordered locus">BPUM_0205</name>
</gene>
<protein>
    <recommendedName>
        <fullName evidence="1">tRNA uridine(34) hydroxylase</fullName>
        <ecNumber evidence="1">1.14.-.-</ecNumber>
    </recommendedName>
    <alternativeName>
        <fullName evidence="1">tRNA hydroxylation protein O</fullName>
    </alternativeName>
</protein>
<comment type="function">
    <text evidence="1">Catalyzes oxygen-dependent 5-hydroxyuridine (ho5U) modification at position 34 in tRNAs.</text>
</comment>
<comment type="catalytic activity">
    <reaction evidence="1">
        <text>uridine(34) in tRNA + AH2 + O2 = 5-hydroxyuridine(34) in tRNA + A + H2O</text>
        <dbReference type="Rhea" id="RHEA:64224"/>
        <dbReference type="Rhea" id="RHEA-COMP:11727"/>
        <dbReference type="Rhea" id="RHEA-COMP:13381"/>
        <dbReference type="ChEBI" id="CHEBI:13193"/>
        <dbReference type="ChEBI" id="CHEBI:15377"/>
        <dbReference type="ChEBI" id="CHEBI:15379"/>
        <dbReference type="ChEBI" id="CHEBI:17499"/>
        <dbReference type="ChEBI" id="CHEBI:65315"/>
        <dbReference type="ChEBI" id="CHEBI:136877"/>
    </reaction>
</comment>
<comment type="similarity">
    <text evidence="1">Belongs to the TrhO family.</text>
</comment>
<proteinExistence type="inferred from homology"/>
<evidence type="ECO:0000255" key="1">
    <source>
        <dbReference type="HAMAP-Rule" id="MF_00469"/>
    </source>
</evidence>
<name>TRHO_BACP2</name>
<sequence>MEKQYRVLLYYQYVPIEDPETFTAEHLAFCKELGLLGRILISSEGINGTVSGTIEQTDKYMEALKEDPRFASMPIKIDEADGHAFKKMHVRHRNELVNLSLEDDVNPLELTGKHLSPVEFYEQMQSPDTVVIDARNDYEFDVGHFRGAVRPDIETFRELPEWIRDNKEILEGKKILTYCTGGVRCEKFSGWLKREGFEDVSQLDGGIVTYGKDPEVQGKLWDGQCYVFDTRLTVPVNQTEHVVVGKDFFTGEPCERYVNCANPACNRKMIATEESEHKYMRSCSHECRTSERNLYVKQHNLSEEEVQERLAVIEQEQAISQG</sequence>
<organism>
    <name type="scientific">Bacillus pumilus (strain SAFR-032)</name>
    <dbReference type="NCBI Taxonomy" id="315750"/>
    <lineage>
        <taxon>Bacteria</taxon>
        <taxon>Bacillati</taxon>
        <taxon>Bacillota</taxon>
        <taxon>Bacilli</taxon>
        <taxon>Bacillales</taxon>
        <taxon>Bacillaceae</taxon>
        <taxon>Bacillus</taxon>
    </lineage>
</organism>
<keyword id="KW-0560">Oxidoreductase</keyword>
<keyword id="KW-0819">tRNA processing</keyword>
<reference key="1">
    <citation type="journal article" date="2007" name="PLoS ONE">
        <title>Paradoxical DNA repair and peroxide resistance gene conservation in Bacillus pumilus SAFR-032.</title>
        <authorList>
            <person name="Gioia J."/>
            <person name="Yerrapragada S."/>
            <person name="Qin X."/>
            <person name="Jiang H."/>
            <person name="Igboeli O.C."/>
            <person name="Muzny D."/>
            <person name="Dugan-Rocha S."/>
            <person name="Ding Y."/>
            <person name="Hawes A."/>
            <person name="Liu W."/>
            <person name="Perez L."/>
            <person name="Kovar C."/>
            <person name="Dinh H."/>
            <person name="Lee S."/>
            <person name="Nazareth L."/>
            <person name="Blyth P."/>
            <person name="Holder M."/>
            <person name="Buhay C."/>
            <person name="Tirumalai M.R."/>
            <person name="Liu Y."/>
            <person name="Dasgupta I."/>
            <person name="Bokhetache L."/>
            <person name="Fujita M."/>
            <person name="Karouia F."/>
            <person name="Eswara Moorthy P."/>
            <person name="Siefert J."/>
            <person name="Uzman A."/>
            <person name="Buzumbo P."/>
            <person name="Verma A."/>
            <person name="Zwiya H."/>
            <person name="McWilliams B.D."/>
            <person name="Olowu A."/>
            <person name="Clinkenbeard K.D."/>
            <person name="Newcombe D."/>
            <person name="Golebiewski L."/>
            <person name="Petrosino J.F."/>
            <person name="Nicholson W.L."/>
            <person name="Fox G.E."/>
            <person name="Venkateswaran K."/>
            <person name="Highlander S.K."/>
            <person name="Weinstock G.M."/>
        </authorList>
    </citation>
    <scope>NUCLEOTIDE SEQUENCE [LARGE SCALE GENOMIC DNA]</scope>
    <source>
        <strain>SAFR-032</strain>
    </source>
</reference>
<feature type="chain" id="PRO_1000060364" description="tRNA uridine(34) hydroxylase">
    <location>
        <begin position="1"/>
        <end position="322"/>
    </location>
</feature>
<feature type="domain" description="Rhodanese" evidence="1">
    <location>
        <begin position="125"/>
        <end position="219"/>
    </location>
</feature>
<feature type="active site" description="Cysteine persulfide intermediate" evidence="1">
    <location>
        <position position="179"/>
    </location>
</feature>
<dbReference type="EC" id="1.14.-.-" evidence="1"/>
<dbReference type="EMBL" id="CP000813">
    <property type="protein sequence ID" value="ABV60904.1"/>
    <property type="molecule type" value="Genomic_DNA"/>
</dbReference>
<dbReference type="RefSeq" id="WP_012008780.1">
    <property type="nucleotide sequence ID" value="NZ_VEIS01000014.1"/>
</dbReference>
<dbReference type="SMR" id="A8F9I7"/>
<dbReference type="STRING" id="315750.BPUM_0205"/>
<dbReference type="GeneID" id="5619457"/>
<dbReference type="KEGG" id="bpu:BPUM_0205"/>
<dbReference type="eggNOG" id="COG1054">
    <property type="taxonomic scope" value="Bacteria"/>
</dbReference>
<dbReference type="HOGENOM" id="CLU_038878_1_0_9"/>
<dbReference type="OrthoDB" id="9778326at2"/>
<dbReference type="Proteomes" id="UP000001355">
    <property type="component" value="Chromosome"/>
</dbReference>
<dbReference type="GO" id="GO:0016705">
    <property type="term" value="F:oxidoreductase activity, acting on paired donors, with incorporation or reduction of molecular oxygen"/>
    <property type="evidence" value="ECO:0007669"/>
    <property type="project" value="UniProtKB-UniRule"/>
</dbReference>
<dbReference type="GO" id="GO:0006400">
    <property type="term" value="P:tRNA modification"/>
    <property type="evidence" value="ECO:0007669"/>
    <property type="project" value="UniProtKB-UniRule"/>
</dbReference>
<dbReference type="CDD" id="cd01518">
    <property type="entry name" value="RHOD_YceA"/>
    <property type="match status" value="1"/>
</dbReference>
<dbReference type="Gene3D" id="3.30.70.100">
    <property type="match status" value="1"/>
</dbReference>
<dbReference type="Gene3D" id="3.40.250.10">
    <property type="entry name" value="Rhodanese-like domain"/>
    <property type="match status" value="1"/>
</dbReference>
<dbReference type="HAMAP" id="MF_00469">
    <property type="entry name" value="TrhO"/>
    <property type="match status" value="1"/>
</dbReference>
<dbReference type="InterPro" id="IPR001763">
    <property type="entry name" value="Rhodanese-like_dom"/>
</dbReference>
<dbReference type="InterPro" id="IPR036873">
    <property type="entry name" value="Rhodanese-like_dom_sf"/>
</dbReference>
<dbReference type="InterPro" id="IPR022111">
    <property type="entry name" value="Rhodanese_C"/>
</dbReference>
<dbReference type="InterPro" id="IPR020936">
    <property type="entry name" value="TrhO"/>
</dbReference>
<dbReference type="InterPro" id="IPR040503">
    <property type="entry name" value="TRHO_N"/>
</dbReference>
<dbReference type="NCBIfam" id="NF001135">
    <property type="entry name" value="PRK00142.1-3"/>
    <property type="match status" value="1"/>
</dbReference>
<dbReference type="PANTHER" id="PTHR43268:SF3">
    <property type="entry name" value="RHODANESE-LIKE DOMAIN-CONTAINING PROTEIN 7-RELATED"/>
    <property type="match status" value="1"/>
</dbReference>
<dbReference type="PANTHER" id="PTHR43268">
    <property type="entry name" value="THIOSULFATE SULFURTRANSFERASE/RHODANESE-LIKE DOMAIN-CONTAINING PROTEIN 2"/>
    <property type="match status" value="1"/>
</dbReference>
<dbReference type="Pfam" id="PF00581">
    <property type="entry name" value="Rhodanese"/>
    <property type="match status" value="1"/>
</dbReference>
<dbReference type="Pfam" id="PF12368">
    <property type="entry name" value="Rhodanese_C"/>
    <property type="match status" value="1"/>
</dbReference>
<dbReference type="Pfam" id="PF17773">
    <property type="entry name" value="UPF0176_N"/>
    <property type="match status" value="1"/>
</dbReference>
<dbReference type="SMART" id="SM00450">
    <property type="entry name" value="RHOD"/>
    <property type="match status" value="1"/>
</dbReference>
<dbReference type="SUPFAM" id="SSF52821">
    <property type="entry name" value="Rhodanese/Cell cycle control phosphatase"/>
    <property type="match status" value="1"/>
</dbReference>
<dbReference type="PROSITE" id="PS50206">
    <property type="entry name" value="RHODANESE_3"/>
    <property type="match status" value="1"/>
</dbReference>
<accession>A8F9I7</accession>